<name>DNAK_COREF</name>
<keyword id="KW-0067">ATP-binding</keyword>
<keyword id="KW-0143">Chaperone</keyword>
<keyword id="KW-0547">Nucleotide-binding</keyword>
<keyword id="KW-0597">Phosphoprotein</keyword>
<keyword id="KW-1185">Reference proteome</keyword>
<keyword id="KW-0346">Stress response</keyword>
<gene>
    <name evidence="1" type="primary">dnaK</name>
    <name type="ordered locus">CE2629</name>
</gene>
<sequence>MGRAVGIDLGTTNSVVSVLEGGEPVVIANSEGSRTTPSVVAFAKNGEVLVGQSAKNQAVTNVDRTIRSVKRHIGTDWSVAIDDKNYTAQEISARILMKLKRDAEAYLGEEVTDAVITVPAYFEDSQRQATKEAGQIAGLNVLRIVNEPTAAALAYGLEKGEQEQTILVFDLGGGTFDVSLLEIGDGVVEVRATSGDNELGGDDWDQRIVDWLVEKFQSSHGIDLTKDKMALQRLREAAEKAKIELSASQNANINLPYITVDADKNPLFLDENLSRAEFQRITQDLLDRTKTPFNQVIKDAGISVSEIDHVVLVGGSTRMPAVTDLVKELTGGREPNKGVNPDEVVAVGAALQAGVLRGEVKDVLLLDVTPLSLGIETKGGVMTKLIERNTTIPTKRSETFTTAEDNQPSVQIQVFQGEREIASANKLLGSFELGGIAPAPRGVPQIEVTFDIDANGIVHVTAKDKGTGKENTITIQDGSGLSQEEIDRMIKDAEAHAEEDKKRREEQEIRNNAESLVYQTHKFVEENDGKISEELKGKVEEAAKGVEETLKGEDIDAIKTAVDKLNTESQEMGRAIYEAEAAAGATQADAGAEGAADDNVVDAEVVDEDVSEEKKDGDK</sequence>
<accession>Q8FM78</accession>
<reference key="1">
    <citation type="journal article" date="2003" name="Genome Res.">
        <title>Comparative complete genome sequence analysis of the amino acid replacements responsible for the thermostability of Corynebacterium efficiens.</title>
        <authorList>
            <person name="Nishio Y."/>
            <person name="Nakamura Y."/>
            <person name="Kawarabayasi Y."/>
            <person name="Usuda Y."/>
            <person name="Kimura E."/>
            <person name="Sugimoto S."/>
            <person name="Matsui K."/>
            <person name="Yamagishi A."/>
            <person name="Kikuchi H."/>
            <person name="Ikeo K."/>
            <person name="Gojobori T."/>
        </authorList>
    </citation>
    <scope>NUCLEOTIDE SEQUENCE [LARGE SCALE GENOMIC DNA]</scope>
    <source>
        <strain>DSM 44549 / YS-314 / AJ 12310 / JCM 11189 / NBRC 100395</strain>
    </source>
</reference>
<evidence type="ECO:0000255" key="1">
    <source>
        <dbReference type="HAMAP-Rule" id="MF_00332"/>
    </source>
</evidence>
<evidence type="ECO:0000256" key="2">
    <source>
        <dbReference type="SAM" id="MobiDB-lite"/>
    </source>
</evidence>
<dbReference type="EMBL" id="BA000035">
    <property type="protein sequence ID" value="BAC19439.1"/>
    <property type="molecule type" value="Genomic_DNA"/>
</dbReference>
<dbReference type="RefSeq" id="WP_006769007.1">
    <property type="nucleotide sequence ID" value="NC_004369.1"/>
</dbReference>
<dbReference type="SMR" id="Q8FM78"/>
<dbReference type="STRING" id="196164.gene:10743076"/>
<dbReference type="KEGG" id="cef:CE2629"/>
<dbReference type="eggNOG" id="COG0443">
    <property type="taxonomic scope" value="Bacteria"/>
</dbReference>
<dbReference type="HOGENOM" id="CLU_005965_2_4_11"/>
<dbReference type="OrthoDB" id="9766019at2"/>
<dbReference type="Proteomes" id="UP000001409">
    <property type="component" value="Chromosome"/>
</dbReference>
<dbReference type="GO" id="GO:0005524">
    <property type="term" value="F:ATP binding"/>
    <property type="evidence" value="ECO:0007669"/>
    <property type="project" value="UniProtKB-UniRule"/>
</dbReference>
<dbReference type="GO" id="GO:0140662">
    <property type="term" value="F:ATP-dependent protein folding chaperone"/>
    <property type="evidence" value="ECO:0007669"/>
    <property type="project" value="InterPro"/>
</dbReference>
<dbReference type="GO" id="GO:0051082">
    <property type="term" value="F:unfolded protein binding"/>
    <property type="evidence" value="ECO:0007669"/>
    <property type="project" value="InterPro"/>
</dbReference>
<dbReference type="CDD" id="cd10234">
    <property type="entry name" value="ASKHA_NBD_HSP70_DnaK-like"/>
    <property type="match status" value="1"/>
</dbReference>
<dbReference type="FunFam" id="2.60.34.10:FF:000014">
    <property type="entry name" value="Chaperone protein DnaK HSP70"/>
    <property type="match status" value="1"/>
</dbReference>
<dbReference type="FunFam" id="1.20.1270.10:FF:000001">
    <property type="entry name" value="Molecular chaperone DnaK"/>
    <property type="match status" value="1"/>
</dbReference>
<dbReference type="FunFam" id="3.30.420.40:FF:000071">
    <property type="entry name" value="Molecular chaperone DnaK"/>
    <property type="match status" value="1"/>
</dbReference>
<dbReference type="FunFam" id="3.90.640.10:FF:000003">
    <property type="entry name" value="Molecular chaperone DnaK"/>
    <property type="match status" value="1"/>
</dbReference>
<dbReference type="Gene3D" id="1.20.1270.10">
    <property type="match status" value="1"/>
</dbReference>
<dbReference type="Gene3D" id="3.30.420.40">
    <property type="match status" value="3"/>
</dbReference>
<dbReference type="Gene3D" id="3.90.640.10">
    <property type="entry name" value="Actin, Chain A, domain 4"/>
    <property type="match status" value="1"/>
</dbReference>
<dbReference type="Gene3D" id="2.60.34.10">
    <property type="entry name" value="Substrate Binding Domain Of DNAk, Chain A, domain 1"/>
    <property type="match status" value="1"/>
</dbReference>
<dbReference type="HAMAP" id="MF_00332">
    <property type="entry name" value="DnaK"/>
    <property type="match status" value="1"/>
</dbReference>
<dbReference type="InterPro" id="IPR043129">
    <property type="entry name" value="ATPase_NBD"/>
</dbReference>
<dbReference type="InterPro" id="IPR012725">
    <property type="entry name" value="Chaperone_DnaK"/>
</dbReference>
<dbReference type="InterPro" id="IPR018181">
    <property type="entry name" value="Heat_shock_70_CS"/>
</dbReference>
<dbReference type="InterPro" id="IPR029048">
    <property type="entry name" value="HSP70_C_sf"/>
</dbReference>
<dbReference type="InterPro" id="IPR029047">
    <property type="entry name" value="HSP70_peptide-bd_sf"/>
</dbReference>
<dbReference type="InterPro" id="IPR013126">
    <property type="entry name" value="Hsp_70_fam"/>
</dbReference>
<dbReference type="NCBIfam" id="NF001413">
    <property type="entry name" value="PRK00290.1"/>
    <property type="match status" value="1"/>
</dbReference>
<dbReference type="NCBIfam" id="TIGR02350">
    <property type="entry name" value="prok_dnaK"/>
    <property type="match status" value="1"/>
</dbReference>
<dbReference type="PANTHER" id="PTHR19375">
    <property type="entry name" value="HEAT SHOCK PROTEIN 70KDA"/>
    <property type="match status" value="1"/>
</dbReference>
<dbReference type="Pfam" id="PF00012">
    <property type="entry name" value="HSP70"/>
    <property type="match status" value="2"/>
</dbReference>
<dbReference type="PRINTS" id="PR00301">
    <property type="entry name" value="HEATSHOCK70"/>
</dbReference>
<dbReference type="SUPFAM" id="SSF53067">
    <property type="entry name" value="Actin-like ATPase domain"/>
    <property type="match status" value="2"/>
</dbReference>
<dbReference type="SUPFAM" id="SSF100934">
    <property type="entry name" value="Heat shock protein 70kD (HSP70), C-terminal subdomain"/>
    <property type="match status" value="1"/>
</dbReference>
<dbReference type="SUPFAM" id="SSF100920">
    <property type="entry name" value="Heat shock protein 70kD (HSP70), peptide-binding domain"/>
    <property type="match status" value="1"/>
</dbReference>
<dbReference type="PROSITE" id="PS00297">
    <property type="entry name" value="HSP70_1"/>
    <property type="match status" value="1"/>
</dbReference>
<dbReference type="PROSITE" id="PS00329">
    <property type="entry name" value="HSP70_2"/>
    <property type="match status" value="1"/>
</dbReference>
<dbReference type="PROSITE" id="PS01036">
    <property type="entry name" value="HSP70_3"/>
    <property type="match status" value="1"/>
</dbReference>
<comment type="function">
    <text evidence="1">Acts as a chaperone.</text>
</comment>
<comment type="induction">
    <text evidence="1">By stress conditions e.g. heat shock.</text>
</comment>
<comment type="similarity">
    <text evidence="1">Belongs to the heat shock protein 70 family.</text>
</comment>
<proteinExistence type="inferred from homology"/>
<protein>
    <recommendedName>
        <fullName evidence="1">Chaperone protein DnaK</fullName>
    </recommendedName>
    <alternativeName>
        <fullName evidence="1">HSP70</fullName>
    </alternativeName>
    <alternativeName>
        <fullName evidence="1">Heat shock 70 kDa protein</fullName>
    </alternativeName>
    <alternativeName>
        <fullName evidence="1">Heat shock protein 70</fullName>
    </alternativeName>
</protein>
<feature type="chain" id="PRO_0000078453" description="Chaperone protein DnaK">
    <location>
        <begin position="1"/>
        <end position="619"/>
    </location>
</feature>
<feature type="region of interest" description="Disordered" evidence="2">
    <location>
        <begin position="582"/>
        <end position="619"/>
    </location>
</feature>
<feature type="compositionally biased region" description="Low complexity" evidence="2">
    <location>
        <begin position="582"/>
        <end position="594"/>
    </location>
</feature>
<feature type="compositionally biased region" description="Acidic residues" evidence="2">
    <location>
        <begin position="595"/>
        <end position="611"/>
    </location>
</feature>
<feature type="modified residue" description="Phosphothreonine; by autocatalysis" evidence="1">
    <location>
        <position position="175"/>
    </location>
</feature>
<organism>
    <name type="scientific">Corynebacterium efficiens (strain DSM 44549 / YS-314 / AJ 12310 / JCM 11189 / NBRC 100395)</name>
    <dbReference type="NCBI Taxonomy" id="196164"/>
    <lineage>
        <taxon>Bacteria</taxon>
        <taxon>Bacillati</taxon>
        <taxon>Actinomycetota</taxon>
        <taxon>Actinomycetes</taxon>
        <taxon>Mycobacteriales</taxon>
        <taxon>Corynebacteriaceae</taxon>
        <taxon>Corynebacterium</taxon>
    </lineage>
</organism>